<dbReference type="EMBL" id="AB246274">
    <property type="protein sequence ID" value="BAE75851.1"/>
    <property type="molecule type" value="mRNA"/>
</dbReference>
<dbReference type="SMR" id="Q2PE75"/>
<dbReference type="GlyCosmos" id="Q2PE75">
    <property type="glycosylation" value="2 sites, No reported glycans"/>
</dbReference>
<dbReference type="GO" id="GO:0005615">
    <property type="term" value="C:extracellular space"/>
    <property type="evidence" value="ECO:0007669"/>
    <property type="project" value="UniProtKB-KW"/>
</dbReference>
<dbReference type="GO" id="GO:0005125">
    <property type="term" value="F:cytokine activity"/>
    <property type="evidence" value="ECO:0007669"/>
    <property type="project" value="UniProtKB-KW"/>
</dbReference>
<dbReference type="GO" id="GO:0005133">
    <property type="term" value="F:type II interferon receptor binding"/>
    <property type="evidence" value="ECO:0007669"/>
    <property type="project" value="InterPro"/>
</dbReference>
<dbReference type="GO" id="GO:0002250">
    <property type="term" value="P:adaptive immune response"/>
    <property type="evidence" value="ECO:0007669"/>
    <property type="project" value="TreeGrafter"/>
</dbReference>
<dbReference type="GO" id="GO:0051607">
    <property type="term" value="P:defense response to virus"/>
    <property type="evidence" value="ECO:0007669"/>
    <property type="project" value="UniProtKB-KW"/>
</dbReference>
<dbReference type="GO" id="GO:0006959">
    <property type="term" value="P:humoral immune response"/>
    <property type="evidence" value="ECO:0007669"/>
    <property type="project" value="TreeGrafter"/>
</dbReference>
<dbReference type="GO" id="GO:0010508">
    <property type="term" value="P:positive regulation of autophagy"/>
    <property type="evidence" value="ECO:0000250"/>
    <property type="project" value="UniProtKB"/>
</dbReference>
<dbReference type="GO" id="GO:0009891">
    <property type="term" value="P:positive regulation of biosynthetic process"/>
    <property type="evidence" value="ECO:0007669"/>
    <property type="project" value="UniProtKB-ARBA"/>
</dbReference>
<dbReference type="FunFam" id="1.20.1250.10:FF:000080">
    <property type="entry name" value="Interferon gamma"/>
    <property type="match status" value="1"/>
</dbReference>
<dbReference type="Gene3D" id="1.20.1250.10">
    <property type="match status" value="1"/>
</dbReference>
<dbReference type="InterPro" id="IPR009079">
    <property type="entry name" value="4_helix_cytokine-like_core"/>
</dbReference>
<dbReference type="InterPro" id="IPR002069">
    <property type="entry name" value="Interferon_gamma"/>
</dbReference>
<dbReference type="PANTHER" id="PTHR11419">
    <property type="entry name" value="INTERFERON GAMMA"/>
    <property type="match status" value="1"/>
</dbReference>
<dbReference type="PANTHER" id="PTHR11419:SF0">
    <property type="entry name" value="INTERFERON GAMMA"/>
    <property type="match status" value="1"/>
</dbReference>
<dbReference type="Pfam" id="PF00714">
    <property type="entry name" value="IFN-gamma"/>
    <property type="match status" value="1"/>
</dbReference>
<dbReference type="PIRSF" id="PIRSF001936">
    <property type="entry name" value="IFN-gamma"/>
    <property type="match status" value="1"/>
</dbReference>
<dbReference type="SUPFAM" id="SSF47266">
    <property type="entry name" value="4-helical cytokines"/>
    <property type="match status" value="1"/>
</dbReference>
<sequence length="166" mass="19464">MKYTSYFLALLLCVLLGFSGSYGQGQFFREIENLKEYFNASNPDVAKGGPLFSEILKNWKDESDKKIIQSQIVSFYFKLFENLKDNQIIQRSMDIIKQNMFQKFLNGSSEKLEDFKKLIQIPVDDLQTQRKAINELIKVMNDLSPKSNLRKRKRSQNLFRGRRASM</sequence>
<feature type="signal peptide" evidence="1">
    <location>
        <begin position="1"/>
        <end position="23"/>
    </location>
</feature>
<feature type="chain" id="PRO_0000252357" description="Interferon gamma">
    <location>
        <begin position="24"/>
        <end position="166"/>
    </location>
</feature>
<feature type="modified residue" description="Pyrrolidone carboxylic acid" evidence="2">
    <location>
        <position position="24"/>
    </location>
</feature>
<feature type="glycosylation site" description="N-linked (GlcNAc...) asparagine" evidence="4">
    <location>
        <position position="39"/>
    </location>
</feature>
<feature type="glycosylation site" description="N-linked (GlcNAc...) asparagine" evidence="4">
    <location>
        <position position="106"/>
    </location>
</feature>
<reference key="1">
    <citation type="journal article" date="2006" name="Vet. Immunol. Immunopathol.">
        <title>Comparative assessment of Th1 and Th2 cytokines of swamp type buffalo and other bubaline breeds by molecular cloning, sequencing and phylogenetics.</title>
        <authorList>
            <person name="Mingala C.N."/>
            <person name="Odbileg R."/>
            <person name="Konnai S."/>
            <person name="Ohashi K."/>
            <person name="Onuma M."/>
        </authorList>
    </citation>
    <scope>NUCLEOTIDE SEQUENCE [MRNA]</scope>
</reference>
<name>IFNG_BUBCA</name>
<evidence type="ECO:0000250" key="1"/>
<evidence type="ECO:0000250" key="2">
    <source>
        <dbReference type="UniProtKB" id="P01579"/>
    </source>
</evidence>
<evidence type="ECO:0000250" key="3">
    <source>
        <dbReference type="UniProtKB" id="P01580"/>
    </source>
</evidence>
<evidence type="ECO:0000255" key="4"/>
<evidence type="ECO:0000305" key="5"/>
<comment type="function">
    <text evidence="2 3">Type II interferon produced by immune cells such as T-cells and NK cells that plays crucial roles in antimicrobial, antiviral, and antitumor responses by activating effector immune cells and enhancing antigen presentation. Primarily signals through the JAK-STAT pathway after interaction with its receptor IFNGR1 to affect gene regulation. Upon IFNG binding, IFNGR1 intracellular domain opens out to allow association of downstream signaling components JAK2, JAK1 and STAT1, leading to STAT1 activation, nuclear translocation and transcription of IFNG-regulated genes. Many of the induced genes are transcription factors such as IRF1 that are able to further drive regulation of a next wave of transcription. Plays a role in class I antigen presentation pathway by inducing a replacement of catalytic proteasome subunits with immunoproteasome subunits. In turn, increases the quantity, quality, and repertoire of peptides for class I MHC loading. Increases the efficiency of peptide generation also by inducing the expression of activator PA28 that associates with the proteasome and alters its proteolytic cleavage preference. Up-regulates as well MHC II complexes on the cell surface by promoting expression of several key molecules such as cathepsins B/CTSB, H/CTSH, and L/CTSL (By similarity). Participates in the regulation of hematopoietic stem cells during development and under homeostatic conditions by affecting their development, quiescence, and differentiation (By similarity).</text>
</comment>
<comment type="subunit">
    <text evidence="2">Homodimer. Interacts with IFNGR1 (via extracellular domain); this interaction promotes IFNGR1 dimerization.</text>
</comment>
<comment type="subcellular location">
    <subcellularLocation>
        <location evidence="2">Secreted</location>
    </subcellularLocation>
</comment>
<comment type="tissue specificity">
    <text>Released primarily from activated T lymphocytes.</text>
</comment>
<comment type="similarity">
    <text evidence="5">Belongs to the type II (or gamma) interferon family.</text>
</comment>
<organism>
    <name type="scientific">Bubalus carabanensis</name>
    <name type="common">Swamp type water buffalo</name>
    <name type="synonym">Bubalus bubalis carabanensis</name>
    <dbReference type="NCBI Taxonomy" id="3119969"/>
    <lineage>
        <taxon>Eukaryota</taxon>
        <taxon>Metazoa</taxon>
        <taxon>Chordata</taxon>
        <taxon>Craniata</taxon>
        <taxon>Vertebrata</taxon>
        <taxon>Euteleostomi</taxon>
        <taxon>Mammalia</taxon>
        <taxon>Eutheria</taxon>
        <taxon>Laurasiatheria</taxon>
        <taxon>Artiodactyla</taxon>
        <taxon>Ruminantia</taxon>
        <taxon>Pecora</taxon>
        <taxon>Bovidae</taxon>
        <taxon>Bovinae</taxon>
        <taxon>Bubalus</taxon>
    </lineage>
</organism>
<accession>Q2PE75</accession>
<proteinExistence type="evidence at transcript level"/>
<protein>
    <recommendedName>
        <fullName>Interferon gamma</fullName>
        <shortName>IFN-gamma</shortName>
    </recommendedName>
</protein>
<keyword id="KW-0051">Antiviral defense</keyword>
<keyword id="KW-0202">Cytokine</keyword>
<keyword id="KW-0325">Glycoprotein</keyword>
<keyword id="KW-0341">Growth regulation</keyword>
<keyword id="KW-0873">Pyrrolidone carboxylic acid</keyword>
<keyword id="KW-0964">Secreted</keyword>
<keyword id="KW-0732">Signal</keyword>
<gene>
    <name type="primary">IFNG</name>
</gene>